<sequence length="501" mass="56035">MTEASEINLSDIKGPIDVNTPITNHRTALIQNYSTKPKLTYQTVFGVNGPLVIVHNVKFPMFNEIVKITLPNGQIRMGQVLESSKNKAVVQVFEGTTGVDAKFTTCEFTGDIFRSPVSLDMLGRIFNGSGKPIDKGPPVLPEDYLDINGQPINPFNRIYPEEMIQTGISAIDVMNSIARGQKIPIFSAAGLPHNEIAAQIVRQGGLVQLPGRNNETVNFAIVFAAMGVNMETARFFKQDFEECGSMDNVCLFLNLANDPTIERIITPRIALTAAEFFAYHCGKHVLVVLTDMSSYAEALREISAAREEVPGRRGFPGYMYTDLATIYERAGRVKGREGSITQIPILTMPNNDITHPIPDLTGYITEGQIYIDKQLHKRLIYPPIDVLPSLSRLMKSAVGEGMTREDHSDLSNQLYACYAMGKDVQAMKAVVGVEALSPDDLLYLEFLAKFEKNFIAQGRYENRTIVESLNIGWELLRIFPREMLKRIPETLLEKYYKRKKQ</sequence>
<dbReference type="EMBL" id="BX284601">
    <property type="protein sequence ID" value="CCD66203.1"/>
    <property type="molecule type" value="Genomic_DNA"/>
</dbReference>
<dbReference type="RefSeq" id="NP_491518.1">
    <property type="nucleotide sequence ID" value="NM_059117.4"/>
</dbReference>
<dbReference type="SMR" id="Q9N5A0"/>
<dbReference type="FunCoup" id="Q9N5A0">
    <property type="interactions" value="1005"/>
</dbReference>
<dbReference type="STRING" id="6239.Y110A7A.12.1"/>
<dbReference type="TCDB" id="3.A.2.2.7">
    <property type="family name" value="the h+- or na+-translocating f-type, v-type and a-type atpase (f-atpase) superfamily"/>
</dbReference>
<dbReference type="PaxDb" id="6239-Y110A7A.12"/>
<dbReference type="PeptideAtlas" id="Q9N5A0"/>
<dbReference type="EnsemblMetazoa" id="Y110A7A.12.1">
    <property type="protein sequence ID" value="Y110A7A.12.1"/>
    <property type="gene ID" value="WBGene00004959"/>
</dbReference>
<dbReference type="GeneID" id="172137"/>
<dbReference type="KEGG" id="cel:CELE_Y110A7A.12"/>
<dbReference type="UCSC" id="Y110A7A.12">
    <property type="organism name" value="c. elegans"/>
</dbReference>
<dbReference type="AGR" id="WB:WBGene00004959"/>
<dbReference type="CTD" id="172137"/>
<dbReference type="WormBase" id="Y110A7A.12">
    <property type="protein sequence ID" value="CE23245"/>
    <property type="gene ID" value="WBGene00004959"/>
    <property type="gene designation" value="spe-5"/>
</dbReference>
<dbReference type="eggNOG" id="KOG1351">
    <property type="taxonomic scope" value="Eukaryota"/>
</dbReference>
<dbReference type="GeneTree" id="ENSGT00970000196287"/>
<dbReference type="HOGENOM" id="CLU_022916_3_0_1"/>
<dbReference type="InParanoid" id="Q9N5A0"/>
<dbReference type="OMA" id="CELRTPN"/>
<dbReference type="OrthoDB" id="1735853at2759"/>
<dbReference type="PhylomeDB" id="Q9N5A0"/>
<dbReference type="Reactome" id="R-CEL-1222556">
    <property type="pathway name" value="ROS and RNS production in phagocytes"/>
</dbReference>
<dbReference type="Reactome" id="R-CEL-77387">
    <property type="pathway name" value="Insulin receptor recycling"/>
</dbReference>
<dbReference type="Reactome" id="R-CEL-917977">
    <property type="pathway name" value="Transferrin endocytosis and recycling"/>
</dbReference>
<dbReference type="Reactome" id="R-CEL-9639288">
    <property type="pathway name" value="Amino acids regulate mTORC1"/>
</dbReference>
<dbReference type="Reactome" id="R-CEL-983712">
    <property type="pathway name" value="Ion channel transport"/>
</dbReference>
<dbReference type="PRO" id="PR:Q9N5A0"/>
<dbReference type="Proteomes" id="UP000001940">
    <property type="component" value="Chromosome I"/>
</dbReference>
<dbReference type="Bgee" id="WBGene00004959">
    <property type="expression patterns" value="Expressed in germ line (C elegans) and 4 other cell types or tissues"/>
</dbReference>
<dbReference type="GO" id="GO:0005737">
    <property type="term" value="C:cytoplasm"/>
    <property type="evidence" value="ECO:0000314"/>
    <property type="project" value="UniProtKB"/>
</dbReference>
<dbReference type="GO" id="GO:0033180">
    <property type="term" value="C:proton-transporting V-type ATPase, V1 domain"/>
    <property type="evidence" value="ECO:0007669"/>
    <property type="project" value="InterPro"/>
</dbReference>
<dbReference type="GO" id="GO:0005524">
    <property type="term" value="F:ATP binding"/>
    <property type="evidence" value="ECO:0007669"/>
    <property type="project" value="UniProtKB-KW"/>
</dbReference>
<dbReference type="GO" id="GO:0046961">
    <property type="term" value="F:proton-transporting ATPase activity, rotational mechanism"/>
    <property type="evidence" value="ECO:0000318"/>
    <property type="project" value="GO_Central"/>
</dbReference>
<dbReference type="GO" id="GO:0046034">
    <property type="term" value="P:ATP metabolic process"/>
    <property type="evidence" value="ECO:0007669"/>
    <property type="project" value="InterPro"/>
</dbReference>
<dbReference type="GO" id="GO:0051452">
    <property type="term" value="P:intracellular pH reduction"/>
    <property type="evidence" value="ECO:0000315"/>
    <property type="project" value="UniProtKB"/>
</dbReference>
<dbReference type="GO" id="GO:0043068">
    <property type="term" value="P:positive regulation of programmed cell death"/>
    <property type="evidence" value="ECO:0000316"/>
    <property type="project" value="WormBase"/>
</dbReference>
<dbReference type="GO" id="GO:0048137">
    <property type="term" value="P:spermatocyte division"/>
    <property type="evidence" value="ECO:0000315"/>
    <property type="project" value="UniProtKB"/>
</dbReference>
<dbReference type="GO" id="GO:0007283">
    <property type="term" value="P:spermatogenesis"/>
    <property type="evidence" value="ECO:0000315"/>
    <property type="project" value="UniProtKB"/>
</dbReference>
<dbReference type="GO" id="GO:0007035">
    <property type="term" value="P:vacuolar acidification"/>
    <property type="evidence" value="ECO:0000318"/>
    <property type="project" value="GO_Central"/>
</dbReference>
<dbReference type="CDD" id="cd18112">
    <property type="entry name" value="ATP-synt_V_A-type_beta_C"/>
    <property type="match status" value="1"/>
</dbReference>
<dbReference type="CDD" id="cd18118">
    <property type="entry name" value="ATP-synt_V_A-type_beta_N"/>
    <property type="match status" value="1"/>
</dbReference>
<dbReference type="CDD" id="cd01135">
    <property type="entry name" value="V_A-ATPase_B"/>
    <property type="match status" value="1"/>
</dbReference>
<dbReference type="FunFam" id="3.40.50.12240:FF:000001">
    <property type="entry name" value="V-type proton ATPase subunit B, brain"/>
    <property type="match status" value="1"/>
</dbReference>
<dbReference type="Gene3D" id="3.40.50.12240">
    <property type="match status" value="1"/>
</dbReference>
<dbReference type="HAMAP" id="MF_00310">
    <property type="entry name" value="ATP_synth_B_arch"/>
    <property type="match status" value="1"/>
</dbReference>
<dbReference type="InterPro" id="IPR055190">
    <property type="entry name" value="ATP-synt_VA_C"/>
</dbReference>
<dbReference type="InterPro" id="IPR020003">
    <property type="entry name" value="ATPase_a/bsu_AS"/>
</dbReference>
<dbReference type="InterPro" id="IPR004100">
    <property type="entry name" value="ATPase_F1/V1/A1_a/bsu_N"/>
</dbReference>
<dbReference type="InterPro" id="IPR000194">
    <property type="entry name" value="ATPase_F1/V1/A1_a/bsu_nucl-bd"/>
</dbReference>
<dbReference type="InterPro" id="IPR005723">
    <property type="entry name" value="ATPase_V1-cplx_bsu"/>
</dbReference>
<dbReference type="InterPro" id="IPR027417">
    <property type="entry name" value="P-loop_NTPase"/>
</dbReference>
<dbReference type="InterPro" id="IPR022879">
    <property type="entry name" value="V-ATPase_su_B/beta"/>
</dbReference>
<dbReference type="NCBIfam" id="NF003235">
    <property type="entry name" value="PRK04196.1"/>
    <property type="match status" value="1"/>
</dbReference>
<dbReference type="NCBIfam" id="TIGR01040">
    <property type="entry name" value="V-ATPase_V1_B"/>
    <property type="match status" value="1"/>
</dbReference>
<dbReference type="PANTHER" id="PTHR43389">
    <property type="entry name" value="V-TYPE PROTON ATPASE SUBUNIT B"/>
    <property type="match status" value="1"/>
</dbReference>
<dbReference type="PANTHER" id="PTHR43389:SF2">
    <property type="entry name" value="V-TYPE PROTON ATPASE SUBUNIT B 2"/>
    <property type="match status" value="1"/>
</dbReference>
<dbReference type="Pfam" id="PF00006">
    <property type="entry name" value="ATP-synt_ab"/>
    <property type="match status" value="1"/>
</dbReference>
<dbReference type="Pfam" id="PF02874">
    <property type="entry name" value="ATP-synt_ab_N"/>
    <property type="match status" value="1"/>
</dbReference>
<dbReference type="Pfam" id="PF22919">
    <property type="entry name" value="ATP-synt_VA_C"/>
    <property type="match status" value="1"/>
</dbReference>
<dbReference type="PIRSF" id="PIRSF039114">
    <property type="entry name" value="V-ATPsynth_beta/V-ATPase_B"/>
    <property type="match status" value="1"/>
</dbReference>
<dbReference type="SUPFAM" id="SSF52540">
    <property type="entry name" value="P-loop containing nucleoside triphosphate hydrolases"/>
    <property type="match status" value="1"/>
</dbReference>
<dbReference type="PROSITE" id="PS00152">
    <property type="entry name" value="ATPASE_ALPHA_BETA"/>
    <property type="match status" value="1"/>
</dbReference>
<name>VATB2_CAEEL</name>
<reference evidence="10" key="1">
    <citation type="journal article" date="1998" name="Science">
        <title>Genome sequence of the nematode C. elegans: a platform for investigating biology.</title>
        <authorList>
            <consortium name="The C. elegans sequencing consortium"/>
        </authorList>
    </citation>
    <scope>NUCLEOTIDE SEQUENCE [LARGE SCALE GENOMIC DNA]</scope>
    <source>
        <strain evidence="10">Bristol N2</strain>
    </source>
</reference>
<reference evidence="8" key="2">
    <citation type="journal article" date="1997" name="Genetics">
        <title>The Caenorhabditis elegans spe-5 gene is required for morphogenesis of a sperm-specific organelle and is associated with an inherent cold-sensitive phenotype.</title>
        <authorList>
            <person name="Machaca K."/>
            <person name="L'Hernault S.W."/>
        </authorList>
    </citation>
    <scope>FUNCTION</scope>
    <scope>MUTAGENESIS OF GLY-110; ASP-172; PRO-382 AND 473-TRP--GLN-501</scope>
</reference>
<reference evidence="8" key="3">
    <citation type="journal article" date="2005" name="Curr. Biol.">
        <title>The vacuolar H+ -ATPase mediates intracellular acidification required for neurodegeneration in C. elegans.</title>
        <authorList>
            <person name="Syntichaki P."/>
            <person name="Samara C."/>
            <person name="Tavernarakis N."/>
        </authorList>
    </citation>
    <scope>FUNCTION</scope>
    <scope>MUTAGENESIS OF 473-TRP--GLN-501</scope>
</reference>
<reference evidence="8" key="4">
    <citation type="journal article" date="2012" name="Genetics">
        <title>Developmental genetics of secretory vesicle acidification during Caenorhabditis elegans spermatogenesis.</title>
        <authorList>
            <person name="Gleason E.J."/>
            <person name="Hartley P.D."/>
            <person name="Henderson M."/>
            <person name="Hill-Harfe K.L."/>
            <person name="Price P.W."/>
            <person name="Weimer R.M."/>
            <person name="Kroft T.L."/>
            <person name="Zhu G.D."/>
            <person name="Cordovado S."/>
            <person name="L'Hernault S.W."/>
        </authorList>
    </citation>
    <scope>FUNCTION</scope>
    <scope>SUBCELLULAR LOCATION</scope>
    <scope>TISSUE SPECIFICITY</scope>
    <scope>DISRUPTION PHENOTYPE</scope>
</reference>
<organism evidence="10">
    <name type="scientific">Caenorhabditis elegans</name>
    <dbReference type="NCBI Taxonomy" id="6239"/>
    <lineage>
        <taxon>Eukaryota</taxon>
        <taxon>Metazoa</taxon>
        <taxon>Ecdysozoa</taxon>
        <taxon>Nematoda</taxon>
        <taxon>Chromadorea</taxon>
        <taxon>Rhabditida</taxon>
        <taxon>Rhabditina</taxon>
        <taxon>Rhabditomorpha</taxon>
        <taxon>Rhabditoidea</taxon>
        <taxon>Rhabditidae</taxon>
        <taxon>Peloderinae</taxon>
        <taxon>Caenorhabditis</taxon>
    </lineage>
</organism>
<proteinExistence type="evidence at protein level"/>
<gene>
    <name evidence="7 11" type="primary">spe-5</name>
    <name evidence="11" type="ORF">Y110A7A.12</name>
</gene>
<accession>Q9N5A0</accession>
<keyword id="KW-0067">ATP-binding</keyword>
<keyword id="KW-0963">Cytoplasm</keyword>
<keyword id="KW-0375">Hydrogen ion transport</keyword>
<keyword id="KW-0406">Ion transport</keyword>
<keyword id="KW-0547">Nucleotide-binding</keyword>
<keyword id="KW-1185">Reference proteome</keyword>
<keyword id="KW-0813">Transport</keyword>
<comment type="function">
    <text evidence="2 4 5 6 9">Non-catalytic subunit of the V1 complex of vacuolar(H+)-ATPase (V-ATPase), a multisubunit enzyme composed of a peripheral complex (V1) that hydrolyzes ATP and a membrane integral complex (V0) that translocates protons (By similarity). V-ATPase is responsible for acidifying and maintaining the pH of intracellular compartments and in some cell types, is targeted to the plasma membrane, where it is responsible for acidifying the extracellular environment (Probable). In neurons, required for necrotic cell death probably by promoting intracellular acidification (PubMed:16005300). Required for spermatogenesis where it regulates the fibrous body-membranous organelle (FBMO) morphology in spermatocytes and the acidification of FBMO-derived secretory membranous organelles (MOs) as spermatids mature (PubMed:22446317, PubMed:9178007).</text>
</comment>
<comment type="subunit">
    <text evidence="2">V-ATPase is a heteromultimeric enzyme made up of two complexes: the ATP-hydrolytic V1 complex and the proton translocation V0 complex (By similarity). The V1 complex consists of three catalytic AB heterodimers that form a heterohexamer, three peripheral stalks each consisting of EG heterodimers, one central rotor including subunits D and F, and the regulatory subunits C and H (By similarity). The proton translocation complex V0 consists of the proton transport subunit a, a ring of proteolipid subunits c9c'', rotary subunit d, subunits e and f, and the accessory subunits vah-19/Ac45 and vah-20/PRR (By similarity).</text>
</comment>
<comment type="subcellular location">
    <subcellularLocation>
        <location evidence="5">Cytoplasm</location>
    </subcellularLocation>
    <text evidence="5">In spermatocytes at the meiotic I stage, localizes to the cytoplasm and to discrete dots (PubMed:22446317). In spermatids and the residual body, localizes to discrete dots in the cytoplasm (PubMed:22446317). In budded spermatids, localizes near the cell membrane as discrete dots that are adjacent to secretory membranous organelles (MOs) (PubMed:22446317).</text>
</comment>
<comment type="tissue specificity">
    <text evidence="5">Predominantly expressed in male and hermaphrodite testis (at protein level).</text>
</comment>
<comment type="disruption phenotype">
    <text evidence="5">Spermatogenesis is arrested at the primary spermatocyte stage.</text>
</comment>
<comment type="similarity">
    <text evidence="3">Belongs to the ATPase alpha/beta chains family.</text>
</comment>
<protein>
    <recommendedName>
        <fullName evidence="8">V-type proton ATPase subunit B 2</fullName>
        <shortName evidence="8">V-ATPase subunit B 2</shortName>
    </recommendedName>
    <alternativeName>
        <fullName evidence="7">Defective spermatogenesis protein 5</fullName>
    </alternativeName>
    <alternativeName>
        <fullName evidence="8">Vacuolar proton pump subunit B 2</fullName>
    </alternativeName>
</protein>
<feature type="chain" id="PRO_0000454048" description="V-type proton ATPase subunit B 2">
    <location>
        <begin position="1"/>
        <end position="501"/>
    </location>
</feature>
<feature type="binding site" evidence="1">
    <location>
        <position position="392"/>
    </location>
    <ligand>
        <name>ATP</name>
        <dbReference type="ChEBI" id="CHEBI:30616"/>
    </ligand>
</feature>
<feature type="mutagenesis site" description="In hc110; reduces self-fertility at 25 degrees Celsius which is almost abolished at 18 degrees Celsius. Spermatogenesis arrest at the spermatocyte stage. Spermatocytes have defective fibrous body-membranous organelle complexes (FBMOs) causing vacuolation of the cytoplasm. The few produced spermatids exhibit an incomplete penetrance for tubulin mis-segregation during the second meiotic division." evidence="6">
    <original>G</original>
    <variation>R</variation>
    <location>
        <position position="110"/>
    </location>
</feature>
<feature type="mutagenesis site" description="In eb30; reduces self-fertility at 25 degrees Celsius which is almost abolished at 18 degrees Celsius." evidence="6">
    <original>D</original>
    <variation>N</variation>
    <location>
        <position position="172"/>
    </location>
</feature>
<feature type="mutagenesis site" description="In eb29; reduces self-fertility at 25 degrees Celsius which is almost abolished at 18 degrees Celsius." evidence="6">
    <original>P</original>
    <variation>S</variation>
    <location>
        <position position="382"/>
    </location>
</feature>
<feature type="mutagenesis site" description="In hc93; reduces self-fertility at 25 degrees Celsius which is almost abolished at 18 degrees Celsius. Suppresses neurodegeneration of touch-receptor neurons in a mec-4 (u231) mutant background." evidence="4 6">
    <location>
        <begin position="473"/>
        <end position="501"/>
    </location>
</feature>
<evidence type="ECO:0000250" key="1">
    <source>
        <dbReference type="UniProtKB" id="P21281"/>
    </source>
</evidence>
<evidence type="ECO:0000250" key="2">
    <source>
        <dbReference type="UniProtKB" id="P31408"/>
    </source>
</evidence>
<evidence type="ECO:0000255" key="3">
    <source>
        <dbReference type="RuleBase" id="RU366021"/>
    </source>
</evidence>
<evidence type="ECO:0000269" key="4">
    <source>
    </source>
</evidence>
<evidence type="ECO:0000269" key="5">
    <source>
    </source>
</evidence>
<evidence type="ECO:0000269" key="6">
    <source>
    </source>
</evidence>
<evidence type="ECO:0000303" key="7">
    <source>
    </source>
</evidence>
<evidence type="ECO:0000305" key="8"/>
<evidence type="ECO:0000305" key="9">
    <source>
    </source>
</evidence>
<evidence type="ECO:0000312" key="10">
    <source>
        <dbReference type="Proteomes" id="UP000001940"/>
    </source>
</evidence>
<evidence type="ECO:0000312" key="11">
    <source>
        <dbReference type="WormBase" id="Y110A7A.12"/>
    </source>
</evidence>